<accession>Q54T49</accession>
<protein>
    <recommendedName>
        <fullName>Acyl-protein thioesterase 1 homolog 1</fullName>
        <ecNumber evidence="2">3.1.2.-</ecNumber>
    </recommendedName>
    <alternativeName>
        <fullName>Palmitoyl-protein hydrolase</fullName>
        <ecNumber evidence="2">3.1.2.22</ecNumber>
    </alternativeName>
</protein>
<organism>
    <name type="scientific">Dictyostelium discoideum</name>
    <name type="common">Social amoeba</name>
    <dbReference type="NCBI Taxonomy" id="44689"/>
    <lineage>
        <taxon>Eukaryota</taxon>
        <taxon>Amoebozoa</taxon>
        <taxon>Evosea</taxon>
        <taxon>Eumycetozoa</taxon>
        <taxon>Dictyostelia</taxon>
        <taxon>Dictyosteliales</taxon>
        <taxon>Dictyosteliaceae</taxon>
        <taxon>Dictyostelium</taxon>
    </lineage>
</organism>
<dbReference type="EC" id="3.1.2.-" evidence="2"/>
<dbReference type="EC" id="3.1.2.22" evidence="2"/>
<dbReference type="EMBL" id="AAFI02000044">
    <property type="protein sequence ID" value="EAL66424.1"/>
    <property type="molecule type" value="Genomic_DNA"/>
</dbReference>
<dbReference type="RefSeq" id="XP_640402.1">
    <property type="nucleotide sequence ID" value="XM_635310.1"/>
</dbReference>
<dbReference type="SMR" id="Q54T49"/>
<dbReference type="FunCoup" id="Q54T49">
    <property type="interactions" value="380"/>
</dbReference>
<dbReference type="STRING" id="44689.Q54T49"/>
<dbReference type="ESTHER" id="dicdi-q54t49">
    <property type="family name" value="LYsophospholipase_carboxylesterase"/>
</dbReference>
<dbReference type="MEROPS" id="S09.941"/>
<dbReference type="PaxDb" id="44689-DDB0234150"/>
<dbReference type="EnsemblProtists" id="EAL66424">
    <property type="protein sequence ID" value="EAL66424"/>
    <property type="gene ID" value="DDB_G0282005"/>
</dbReference>
<dbReference type="GeneID" id="8623357"/>
<dbReference type="KEGG" id="ddi:DDB_G0282005"/>
<dbReference type="dictyBase" id="DDB_G0282005"/>
<dbReference type="VEuPathDB" id="AmoebaDB:DDB_G0282005"/>
<dbReference type="eggNOG" id="KOG2112">
    <property type="taxonomic scope" value="Eukaryota"/>
</dbReference>
<dbReference type="HOGENOM" id="CLU_049413_3_2_1"/>
<dbReference type="InParanoid" id="Q54T49"/>
<dbReference type="OMA" id="WYDILAM"/>
<dbReference type="PhylomeDB" id="Q54T49"/>
<dbReference type="Reactome" id="R-DDI-203615">
    <property type="pathway name" value="eNOS activation"/>
</dbReference>
<dbReference type="Reactome" id="R-DDI-9648002">
    <property type="pathway name" value="RAS processing"/>
</dbReference>
<dbReference type="PRO" id="PR:Q54T49"/>
<dbReference type="Proteomes" id="UP000002195">
    <property type="component" value="Chromosome 3"/>
</dbReference>
<dbReference type="GO" id="GO:0005737">
    <property type="term" value="C:cytoplasm"/>
    <property type="evidence" value="ECO:0000318"/>
    <property type="project" value="GO_Central"/>
</dbReference>
<dbReference type="GO" id="GO:0005634">
    <property type="term" value="C:nucleus"/>
    <property type="evidence" value="ECO:0007669"/>
    <property type="project" value="UniProtKB-SubCell"/>
</dbReference>
<dbReference type="GO" id="GO:0052689">
    <property type="term" value="F:carboxylic ester hydrolase activity"/>
    <property type="evidence" value="ECO:0000318"/>
    <property type="project" value="GO_Central"/>
</dbReference>
<dbReference type="GO" id="GO:0008474">
    <property type="term" value="F:palmitoyl-(protein) hydrolase activity"/>
    <property type="evidence" value="ECO:0000318"/>
    <property type="project" value="GO_Central"/>
</dbReference>
<dbReference type="GO" id="GO:0006631">
    <property type="term" value="P:fatty acid metabolic process"/>
    <property type="evidence" value="ECO:0007669"/>
    <property type="project" value="UniProtKB-KW"/>
</dbReference>
<dbReference type="FunFam" id="3.40.50.1820:FF:000276">
    <property type="entry name" value="Acyl-protein thioesterase 1"/>
    <property type="match status" value="1"/>
</dbReference>
<dbReference type="Gene3D" id="3.40.50.1820">
    <property type="entry name" value="alpha/beta hydrolase"/>
    <property type="match status" value="1"/>
</dbReference>
<dbReference type="InterPro" id="IPR029058">
    <property type="entry name" value="AB_hydrolase_fold"/>
</dbReference>
<dbReference type="InterPro" id="IPR050565">
    <property type="entry name" value="LYPA1-2/EST-like"/>
</dbReference>
<dbReference type="InterPro" id="IPR003140">
    <property type="entry name" value="PLipase/COase/thioEstase"/>
</dbReference>
<dbReference type="PANTHER" id="PTHR10655:SF17">
    <property type="entry name" value="LYSOPHOSPHOLIPASE-LIKE PROTEIN 1"/>
    <property type="match status" value="1"/>
</dbReference>
<dbReference type="PANTHER" id="PTHR10655">
    <property type="entry name" value="LYSOPHOSPHOLIPASE-RELATED"/>
    <property type="match status" value="1"/>
</dbReference>
<dbReference type="Pfam" id="PF02230">
    <property type="entry name" value="Abhydrolase_2"/>
    <property type="match status" value="1"/>
</dbReference>
<dbReference type="SUPFAM" id="SSF53474">
    <property type="entry name" value="alpha/beta-Hydrolases"/>
    <property type="match status" value="1"/>
</dbReference>
<reference key="1">
    <citation type="journal article" date="2005" name="Nature">
        <title>The genome of the social amoeba Dictyostelium discoideum.</title>
        <authorList>
            <person name="Eichinger L."/>
            <person name="Pachebat J.A."/>
            <person name="Gloeckner G."/>
            <person name="Rajandream M.A."/>
            <person name="Sucgang R."/>
            <person name="Berriman M."/>
            <person name="Song J."/>
            <person name="Olsen R."/>
            <person name="Szafranski K."/>
            <person name="Xu Q."/>
            <person name="Tunggal B."/>
            <person name="Kummerfeld S."/>
            <person name="Madera M."/>
            <person name="Konfortov B.A."/>
            <person name="Rivero F."/>
            <person name="Bankier A.T."/>
            <person name="Lehmann R."/>
            <person name="Hamlin N."/>
            <person name="Davies R."/>
            <person name="Gaudet P."/>
            <person name="Fey P."/>
            <person name="Pilcher K."/>
            <person name="Chen G."/>
            <person name="Saunders D."/>
            <person name="Sodergren E.J."/>
            <person name="Davis P."/>
            <person name="Kerhornou A."/>
            <person name="Nie X."/>
            <person name="Hall N."/>
            <person name="Anjard C."/>
            <person name="Hemphill L."/>
            <person name="Bason N."/>
            <person name="Farbrother P."/>
            <person name="Desany B."/>
            <person name="Just E."/>
            <person name="Morio T."/>
            <person name="Rost R."/>
            <person name="Churcher C.M."/>
            <person name="Cooper J."/>
            <person name="Haydock S."/>
            <person name="van Driessche N."/>
            <person name="Cronin A."/>
            <person name="Goodhead I."/>
            <person name="Muzny D.M."/>
            <person name="Mourier T."/>
            <person name="Pain A."/>
            <person name="Lu M."/>
            <person name="Harper D."/>
            <person name="Lindsay R."/>
            <person name="Hauser H."/>
            <person name="James K.D."/>
            <person name="Quiles M."/>
            <person name="Madan Babu M."/>
            <person name="Saito T."/>
            <person name="Buchrieser C."/>
            <person name="Wardroper A."/>
            <person name="Felder M."/>
            <person name="Thangavelu M."/>
            <person name="Johnson D."/>
            <person name="Knights A."/>
            <person name="Loulseged H."/>
            <person name="Mungall K.L."/>
            <person name="Oliver K."/>
            <person name="Price C."/>
            <person name="Quail M.A."/>
            <person name="Urushihara H."/>
            <person name="Hernandez J."/>
            <person name="Rabbinowitsch E."/>
            <person name="Steffen D."/>
            <person name="Sanders M."/>
            <person name="Ma J."/>
            <person name="Kohara Y."/>
            <person name="Sharp S."/>
            <person name="Simmonds M.N."/>
            <person name="Spiegler S."/>
            <person name="Tivey A."/>
            <person name="Sugano S."/>
            <person name="White B."/>
            <person name="Walker D."/>
            <person name="Woodward J.R."/>
            <person name="Winckler T."/>
            <person name="Tanaka Y."/>
            <person name="Shaulsky G."/>
            <person name="Schleicher M."/>
            <person name="Weinstock G.M."/>
            <person name="Rosenthal A."/>
            <person name="Cox E.C."/>
            <person name="Chisholm R.L."/>
            <person name="Gibbs R.A."/>
            <person name="Loomis W.F."/>
            <person name="Platzer M."/>
            <person name="Kay R.R."/>
            <person name="Williams J.G."/>
            <person name="Dear P.H."/>
            <person name="Noegel A.A."/>
            <person name="Barrell B.G."/>
            <person name="Kuspa A."/>
        </authorList>
    </citation>
    <scope>NUCLEOTIDE SEQUENCE [LARGE SCALE GENOMIC DNA]</scope>
    <source>
        <strain>AX4</strain>
    </source>
</reference>
<feature type="chain" id="PRO_0000331200" description="Acyl-protein thioesterase 1 homolog 1">
    <location>
        <begin position="1"/>
        <end position="226"/>
    </location>
</feature>
<feature type="active site" description="Charge relay system" evidence="1">
    <location>
        <position position="121"/>
    </location>
</feature>
<feature type="active site" description="Charge relay system" evidence="1">
    <location>
        <position position="174"/>
    </location>
</feature>
<feature type="active site" description="Charge relay system" evidence="1">
    <location>
        <position position="206"/>
    </location>
</feature>
<keyword id="KW-0963">Cytoplasm</keyword>
<keyword id="KW-0276">Fatty acid metabolism</keyword>
<keyword id="KW-0378">Hydrolase</keyword>
<keyword id="KW-0443">Lipid metabolism</keyword>
<keyword id="KW-0539">Nucleus</keyword>
<keyword id="KW-1185">Reference proteome</keyword>
<keyword id="KW-0719">Serine esterase</keyword>
<evidence type="ECO:0000250" key="1"/>
<evidence type="ECO:0000250" key="2">
    <source>
        <dbReference type="UniProtKB" id="Q12354"/>
    </source>
</evidence>
<evidence type="ECO:0000305" key="3"/>
<proteinExistence type="evidence at transcript level"/>
<comment type="function">
    <text evidence="2">Hydrolyzes fatty acids from S-acylated cysteine residues in proteins with a strong preference for palmitoylated G-alpha proteins over other acyl substrates. Mediates the deacylation of G-alpha proteins such as GPA1 in vivo, but has weak or no activity toward palmitoylated Ras proteins. Has weak lysophospholipase activity in vitro; however such activity may not exist in vivo.</text>
</comment>
<comment type="catalytic activity">
    <reaction evidence="2">
        <text>S-hexadecanoyl-L-cysteinyl-[protein] + H2O = L-cysteinyl-[protein] + hexadecanoate + H(+)</text>
        <dbReference type="Rhea" id="RHEA:19233"/>
        <dbReference type="Rhea" id="RHEA-COMP:10131"/>
        <dbReference type="Rhea" id="RHEA-COMP:11032"/>
        <dbReference type="ChEBI" id="CHEBI:7896"/>
        <dbReference type="ChEBI" id="CHEBI:15377"/>
        <dbReference type="ChEBI" id="CHEBI:15378"/>
        <dbReference type="ChEBI" id="CHEBI:29950"/>
        <dbReference type="ChEBI" id="CHEBI:74151"/>
        <dbReference type="EC" id="3.1.2.22"/>
    </reaction>
</comment>
<comment type="subcellular location">
    <subcellularLocation>
        <location evidence="2">Cytoplasm</location>
    </subcellularLocation>
    <subcellularLocation>
        <location evidence="2">Nucleus</location>
    </subcellularLocation>
</comment>
<comment type="similarity">
    <text evidence="3">Belongs to the AB hydrolase superfamily. AB hydrolase 2 family.</text>
</comment>
<name>APT11_DICDI</name>
<gene>
    <name type="ORF">DDB_G0282005</name>
</gene>
<sequence length="226" mass="25073">MIKTILKNSYIQKEITTHSATVIFSHGLGDSGAGWIEVMEEIQSRNNGHIRFICPNAPIQAVTLNGGFKMPSWYDIKSLSSRGDEDPAQVDESKNIIETIIKHEMEEEKIPAERIIIGGFSQGAALSLYTFYSQTETKLGGCIALSGYLPLATKFVANSLNKEQPLLMIHGDCDQVVRHQWGKLSFDHLKSQGINGEFITLKGLGHHSSPEEIDLMTKFISKTLPK</sequence>